<reference key="1">
    <citation type="journal article" date="2002" name="Nature">
        <title>Sequence and analysis of chromosome 2 of Dictyostelium discoideum.</title>
        <authorList>
            <person name="Gloeckner G."/>
            <person name="Eichinger L."/>
            <person name="Szafranski K."/>
            <person name="Pachebat J.A."/>
            <person name="Bankier A.T."/>
            <person name="Dear P.H."/>
            <person name="Lehmann R."/>
            <person name="Baumgart C."/>
            <person name="Parra G."/>
            <person name="Abril J.F."/>
            <person name="Guigo R."/>
            <person name="Kumpf K."/>
            <person name="Tunggal B."/>
            <person name="Cox E.C."/>
            <person name="Quail M.A."/>
            <person name="Platzer M."/>
            <person name="Rosenthal A."/>
            <person name="Noegel A.A."/>
        </authorList>
    </citation>
    <scope>NUCLEOTIDE SEQUENCE [LARGE SCALE GENOMIC DNA]</scope>
    <source>
        <strain>AX4</strain>
    </source>
</reference>
<reference key="2">
    <citation type="journal article" date="2005" name="Nature">
        <title>The genome of the social amoeba Dictyostelium discoideum.</title>
        <authorList>
            <person name="Eichinger L."/>
            <person name="Pachebat J.A."/>
            <person name="Gloeckner G."/>
            <person name="Rajandream M.A."/>
            <person name="Sucgang R."/>
            <person name="Berriman M."/>
            <person name="Song J."/>
            <person name="Olsen R."/>
            <person name="Szafranski K."/>
            <person name="Xu Q."/>
            <person name="Tunggal B."/>
            <person name="Kummerfeld S."/>
            <person name="Madera M."/>
            <person name="Konfortov B.A."/>
            <person name="Rivero F."/>
            <person name="Bankier A.T."/>
            <person name="Lehmann R."/>
            <person name="Hamlin N."/>
            <person name="Davies R."/>
            <person name="Gaudet P."/>
            <person name="Fey P."/>
            <person name="Pilcher K."/>
            <person name="Chen G."/>
            <person name="Saunders D."/>
            <person name="Sodergren E.J."/>
            <person name="Davis P."/>
            <person name="Kerhornou A."/>
            <person name="Nie X."/>
            <person name="Hall N."/>
            <person name="Anjard C."/>
            <person name="Hemphill L."/>
            <person name="Bason N."/>
            <person name="Farbrother P."/>
            <person name="Desany B."/>
            <person name="Just E."/>
            <person name="Morio T."/>
            <person name="Rost R."/>
            <person name="Churcher C.M."/>
            <person name="Cooper J."/>
            <person name="Haydock S."/>
            <person name="van Driessche N."/>
            <person name="Cronin A."/>
            <person name="Goodhead I."/>
            <person name="Muzny D.M."/>
            <person name="Mourier T."/>
            <person name="Pain A."/>
            <person name="Lu M."/>
            <person name="Harper D."/>
            <person name="Lindsay R."/>
            <person name="Hauser H."/>
            <person name="James K.D."/>
            <person name="Quiles M."/>
            <person name="Madan Babu M."/>
            <person name="Saito T."/>
            <person name="Buchrieser C."/>
            <person name="Wardroper A."/>
            <person name="Felder M."/>
            <person name="Thangavelu M."/>
            <person name="Johnson D."/>
            <person name="Knights A."/>
            <person name="Loulseged H."/>
            <person name="Mungall K.L."/>
            <person name="Oliver K."/>
            <person name="Price C."/>
            <person name="Quail M.A."/>
            <person name="Urushihara H."/>
            <person name="Hernandez J."/>
            <person name="Rabbinowitsch E."/>
            <person name="Steffen D."/>
            <person name="Sanders M."/>
            <person name="Ma J."/>
            <person name="Kohara Y."/>
            <person name="Sharp S."/>
            <person name="Simmonds M.N."/>
            <person name="Spiegler S."/>
            <person name="Tivey A."/>
            <person name="Sugano S."/>
            <person name="White B."/>
            <person name="Walker D."/>
            <person name="Woodward J.R."/>
            <person name="Winckler T."/>
            <person name="Tanaka Y."/>
            <person name="Shaulsky G."/>
            <person name="Schleicher M."/>
            <person name="Weinstock G.M."/>
            <person name="Rosenthal A."/>
            <person name="Cox E.C."/>
            <person name="Chisholm R.L."/>
            <person name="Gibbs R.A."/>
            <person name="Loomis W.F."/>
            <person name="Platzer M."/>
            <person name="Kay R.R."/>
            <person name="Williams J.G."/>
            <person name="Dear P.H."/>
            <person name="Noegel A.A."/>
            <person name="Barrell B.G."/>
            <person name="Kuspa A."/>
        </authorList>
    </citation>
    <scope>NUCLEOTIDE SEQUENCE [LARGE SCALE GENOMIC DNA]</scope>
    <source>
        <strain>AX4</strain>
    </source>
</reference>
<keyword id="KW-0067">ATP-binding</keyword>
<keyword id="KW-0547">Nucleotide-binding</keyword>
<keyword id="KW-1185">Reference proteome</keyword>
<keyword id="KW-0677">Repeat</keyword>
<dbReference type="EMBL" id="AAFI02000014">
    <property type="protein sequence ID" value="EAL69255.1"/>
    <property type="molecule type" value="Genomic_DNA"/>
</dbReference>
<dbReference type="RefSeq" id="XP_643187.1">
    <property type="nucleotide sequence ID" value="XM_638095.1"/>
</dbReference>
<dbReference type="SMR" id="Q8T126"/>
<dbReference type="FunCoup" id="Q8T126">
    <property type="interactions" value="640"/>
</dbReference>
<dbReference type="PaxDb" id="44689-DDB0231207"/>
<dbReference type="EnsemblProtists" id="EAL69255">
    <property type="protein sequence ID" value="EAL69255"/>
    <property type="gene ID" value="DDB_G0276349"/>
</dbReference>
<dbReference type="GeneID" id="8620459"/>
<dbReference type="KEGG" id="ddi:DDB_G0276349"/>
<dbReference type="dictyBase" id="DDB_G0276349">
    <property type="gene designation" value="fnkC"/>
</dbReference>
<dbReference type="VEuPathDB" id="AmoebaDB:DDB_G0276349"/>
<dbReference type="eggNOG" id="KOG1863">
    <property type="taxonomic scope" value="Eukaryota"/>
</dbReference>
<dbReference type="eggNOG" id="KOG4645">
    <property type="taxonomic scope" value="Eukaryota"/>
</dbReference>
<dbReference type="HOGENOM" id="CLU_261259_0_0_1"/>
<dbReference type="InParanoid" id="Q8T126"/>
<dbReference type="OMA" id="FIQKCLI"/>
<dbReference type="PRO" id="PR:Q8T126"/>
<dbReference type="Proteomes" id="UP000002195">
    <property type="component" value="Chromosome 2"/>
</dbReference>
<dbReference type="GO" id="GO:0005524">
    <property type="term" value="F:ATP binding"/>
    <property type="evidence" value="ECO:0007669"/>
    <property type="project" value="UniProtKB-KW"/>
</dbReference>
<dbReference type="GO" id="GO:0004672">
    <property type="term" value="F:protein kinase activity"/>
    <property type="evidence" value="ECO:0007669"/>
    <property type="project" value="InterPro"/>
</dbReference>
<dbReference type="CDD" id="cd00121">
    <property type="entry name" value="MATH"/>
    <property type="match status" value="2"/>
</dbReference>
<dbReference type="Gene3D" id="2.60.210.10">
    <property type="entry name" value="Apoptosis, Tumor Necrosis Factor Receptor Associated Protein 2, Chain A"/>
    <property type="match status" value="2"/>
</dbReference>
<dbReference type="Gene3D" id="3.30.200.20">
    <property type="entry name" value="Phosphorylase Kinase, domain 1"/>
    <property type="match status" value="1"/>
</dbReference>
<dbReference type="Gene3D" id="1.10.510.10">
    <property type="entry name" value="Transferase(Phosphotransferase) domain 1"/>
    <property type="match status" value="2"/>
</dbReference>
<dbReference type="InterPro" id="IPR008615">
    <property type="entry name" value="FNIP"/>
</dbReference>
<dbReference type="InterPro" id="IPR011009">
    <property type="entry name" value="Kinase-like_dom_sf"/>
</dbReference>
<dbReference type="InterPro" id="IPR002083">
    <property type="entry name" value="MATH/TRAF_dom"/>
</dbReference>
<dbReference type="InterPro" id="IPR000719">
    <property type="entry name" value="Prot_kinase_dom"/>
</dbReference>
<dbReference type="InterPro" id="IPR051251">
    <property type="entry name" value="STK_FNIP-Repeat"/>
</dbReference>
<dbReference type="InterPro" id="IPR008974">
    <property type="entry name" value="TRAF-like"/>
</dbReference>
<dbReference type="PANTHER" id="PTHR32134">
    <property type="entry name" value="FNIP REPEAT-CONTAINING PROTEIN"/>
    <property type="match status" value="1"/>
</dbReference>
<dbReference type="PANTHER" id="PTHR32134:SF184">
    <property type="entry name" value="INACTIVE SERINE_THREONINE-PROTEIN KINASE FNKC-RELATED"/>
    <property type="match status" value="1"/>
</dbReference>
<dbReference type="Pfam" id="PF05725">
    <property type="entry name" value="FNIP"/>
    <property type="match status" value="5"/>
</dbReference>
<dbReference type="Pfam" id="PF22486">
    <property type="entry name" value="MATH_2"/>
    <property type="match status" value="2"/>
</dbReference>
<dbReference type="Pfam" id="PF00069">
    <property type="entry name" value="Pkinase"/>
    <property type="match status" value="1"/>
</dbReference>
<dbReference type="SMART" id="SM00061">
    <property type="entry name" value="MATH"/>
    <property type="match status" value="2"/>
</dbReference>
<dbReference type="SMART" id="SM00220">
    <property type="entry name" value="S_TKc"/>
    <property type="match status" value="1"/>
</dbReference>
<dbReference type="SUPFAM" id="SSF56112">
    <property type="entry name" value="Protein kinase-like (PK-like)"/>
    <property type="match status" value="1"/>
</dbReference>
<dbReference type="SUPFAM" id="SSF49599">
    <property type="entry name" value="TRAF domain-like"/>
    <property type="match status" value="2"/>
</dbReference>
<dbReference type="PROSITE" id="PS50144">
    <property type="entry name" value="MATH"/>
    <property type="match status" value="2"/>
</dbReference>
<dbReference type="PROSITE" id="PS50011">
    <property type="entry name" value="PROTEIN_KINASE_DOM"/>
    <property type="match status" value="1"/>
</dbReference>
<name>FNKC_DICDI</name>
<proteinExistence type="inferred from homology"/>
<accession>Q8T126</accession>
<accession>Q551T8</accession>
<feature type="chain" id="PRO_0000363982" description="Probable inactive serine/threonine-protein kinase fnkC">
    <location>
        <begin position="1"/>
        <end position="1304"/>
    </location>
</feature>
<feature type="domain" description="Protein kinase" evidence="2">
    <location>
        <begin position="33"/>
        <end position="402"/>
    </location>
</feature>
<feature type="repeat" description="FNIP 1">
    <location>
        <begin position="514"/>
        <end position="556"/>
    </location>
</feature>
<feature type="repeat" description="FNIP 2">
    <location>
        <begin position="710"/>
        <end position="753"/>
    </location>
</feature>
<feature type="repeat" description="FNIP 3">
    <location>
        <begin position="754"/>
        <end position="797"/>
    </location>
</feature>
<feature type="repeat" description="FNIP 4">
    <location>
        <begin position="798"/>
        <end position="841"/>
    </location>
</feature>
<feature type="repeat" description="FNIP 5">
    <location>
        <begin position="900"/>
        <end position="943"/>
    </location>
</feature>
<feature type="domain" description="MATH 1" evidence="1">
    <location>
        <begin position="1025"/>
        <end position="1154"/>
    </location>
</feature>
<feature type="domain" description="MATH 2" evidence="1">
    <location>
        <begin position="1172"/>
        <end position="1291"/>
    </location>
</feature>
<feature type="region of interest" description="Disordered" evidence="3">
    <location>
        <begin position="208"/>
        <end position="277"/>
    </location>
</feature>
<feature type="compositionally biased region" description="Low complexity" evidence="3">
    <location>
        <begin position="210"/>
        <end position="269"/>
    </location>
</feature>
<feature type="binding site" evidence="2">
    <location>
        <begin position="39"/>
        <end position="47"/>
    </location>
    <ligand>
        <name>ATP</name>
        <dbReference type="ChEBI" id="CHEBI:30616"/>
    </ligand>
</feature>
<feature type="binding site" evidence="2">
    <location>
        <position position="68"/>
    </location>
    <ligand>
        <name>ATP</name>
        <dbReference type="ChEBI" id="CHEBI:30616"/>
    </ligand>
</feature>
<sequence length="1304" mass="147936">MDNNNSNNKNNEESNNIVIPILSEKEKKHLYEFEIIRILKKDEFSTTCKAKKLSGQFNEKRVNFCIIKIIKKRVKKFDSKKNEIIIEIDPRKEREILEKIKHICVLEYYGYSEDEDNGYIYTEYIQGGIDIVETVTNKLLKEHSHSFQSEDIIRRCAFQLVLLLNHLHNNLHIIHGNINTDNVLIADQEFSLKLFDFSLSKDISYYSKDNNNNNNNNNNNNNNNNNNNNNNNNNNNNNNANNSNNNTLNNLSIVNNNSSSSSNDNSSEAEGGGGGGEASITSTISTILSGSSSSQLSTPSTSLESSFSLEINLNDSSCYLIAPEIRNQQKITSKGLSKKSDIWGLGCLLLLMVGGDPKITTNFEPTIPYHLSNNCKNFIQKCLIQDPYHRWDTNLLLTHKFIEKTSFENSCNNQNNSSTTTTTTINTYSIENEENILLINGSNGMNEFEEIPNYITTLKFQESFNMEIVNEMFTDSIVHLEFPQGFNKLDFNELPDFLSTLIYHGEFNIESNYHSKSLKPRDIPKSIIHLQLPNYNLKIRRNSIPDQTKFLILGSDLGENEIQSLINLPPSIIDLEFGCDLELILNFLTQEMIPSNITSLKINSQQIFLPFKRSNPFGLTNNIGNNNSNNGEQFNIPIDELPLSKDINDLMILETVEINNLNQLNSNKLLTLTNRVGKLIFSKEFDEPLTIGCIKSRSITSLKFNKGSRFNQLLVVGCLPVNLTSLEFGDRFNQALSVGCIPPKVTHLKFGRCFNQPLKLGVIPDSCTFIQFGSQFNQSLEPMVIPSSVKELIFGSQYNQPTIQGTFPDRIKKLVFSDDHDQFHSQDTLPKSLVHLEFGESQNFNQILFNQSSSNLIPSLTPPPPIYQKLTTFIFNGYFTVPLKVFDLPLSITHLELPQYNDILEKDCIPSFVKTLVLGSSFTIIESFINLPKSITSLSFGCDENVIGLINQSLIPPNCNTLKINGQSISLPITQTLQIFKNPILPTESSLILSQQQQQQQQQQQMDLSVEYENQNFLTTNTLNQGSWIISINNFSNRKDQFYSPIFSLIGSNWRCKFYSNGKDASTSGKLSIFISNCDLLNNPFTIFLEKSISYKLTLINQKNPNESIQKSSSHTFSIKEFNHGYGSFIGLFSLLNPNNGFLVNNTIKVRIDAAPTSPLVNTYDKYNIGLNQAFSYSVPMMSKKSEPFISPIFMSCGRKWIIKIYPMGQPSSNYMSVFLEYRDEGEENVHFSLELISQLYPEQSIKYWVQYRFNSKSNSFGYPKFIGVSTLMDPDMGFLVNDTIILNVSILQLKPIKKSFGFL</sequence>
<organism>
    <name type="scientific">Dictyostelium discoideum</name>
    <name type="common">Social amoeba</name>
    <dbReference type="NCBI Taxonomy" id="44689"/>
    <lineage>
        <taxon>Eukaryota</taxon>
        <taxon>Amoebozoa</taxon>
        <taxon>Evosea</taxon>
        <taxon>Eumycetozoa</taxon>
        <taxon>Dictyostelia</taxon>
        <taxon>Dictyosteliales</taxon>
        <taxon>Dictyosteliaceae</taxon>
        <taxon>Dictyostelium</taxon>
    </lineage>
</organism>
<evidence type="ECO:0000255" key="1">
    <source>
        <dbReference type="PROSITE-ProRule" id="PRU00129"/>
    </source>
</evidence>
<evidence type="ECO:0000255" key="2">
    <source>
        <dbReference type="PROSITE-ProRule" id="PRU00159"/>
    </source>
</evidence>
<evidence type="ECO:0000256" key="3">
    <source>
        <dbReference type="SAM" id="MobiDB-lite"/>
    </source>
</evidence>
<evidence type="ECO:0000305" key="4"/>
<comment type="domain">
    <text>The protein kinase domain is predicted to be catalytically inactive.</text>
</comment>
<comment type="similarity">
    <text evidence="4">Belongs to the protein kinase superfamily. STE Ser/Thr protein kinase family.</text>
</comment>
<protein>
    <recommendedName>
        <fullName>Probable inactive serine/threonine-protein kinase fnkC</fullName>
    </recommendedName>
</protein>
<gene>
    <name type="primary">fnkC</name>
    <name type="synonym">FNIPK-C</name>
    <name type="ORF">DDB_G0276349</name>
</gene>